<organism>
    <name type="scientific">Shewanella sp. (strain W3-18-1)</name>
    <dbReference type="NCBI Taxonomy" id="351745"/>
    <lineage>
        <taxon>Bacteria</taxon>
        <taxon>Pseudomonadati</taxon>
        <taxon>Pseudomonadota</taxon>
        <taxon>Gammaproteobacteria</taxon>
        <taxon>Alteromonadales</taxon>
        <taxon>Shewanellaceae</taxon>
        <taxon>Shewanella</taxon>
    </lineage>
</organism>
<reference key="1">
    <citation type="submission" date="2006-12" db="EMBL/GenBank/DDBJ databases">
        <title>Complete sequence of Shewanella sp. W3-18-1.</title>
        <authorList>
            <consortium name="US DOE Joint Genome Institute"/>
            <person name="Copeland A."/>
            <person name="Lucas S."/>
            <person name="Lapidus A."/>
            <person name="Barry K."/>
            <person name="Detter J.C."/>
            <person name="Glavina del Rio T."/>
            <person name="Hammon N."/>
            <person name="Israni S."/>
            <person name="Dalin E."/>
            <person name="Tice H."/>
            <person name="Pitluck S."/>
            <person name="Chain P."/>
            <person name="Malfatti S."/>
            <person name="Shin M."/>
            <person name="Vergez L."/>
            <person name="Schmutz J."/>
            <person name="Larimer F."/>
            <person name="Land M."/>
            <person name="Hauser L."/>
            <person name="Kyrpides N."/>
            <person name="Lykidis A."/>
            <person name="Tiedje J."/>
            <person name="Richardson P."/>
        </authorList>
    </citation>
    <scope>NUCLEOTIDE SEQUENCE [LARGE SCALE GENOMIC DNA]</scope>
    <source>
        <strain>W3-18-1</strain>
    </source>
</reference>
<keyword id="KW-0050">Antiport</keyword>
<keyword id="KW-0997">Cell inner membrane</keyword>
<keyword id="KW-1003">Cell membrane</keyword>
<keyword id="KW-0406">Ion transport</keyword>
<keyword id="KW-0472">Membrane</keyword>
<keyword id="KW-0630">Potassium</keyword>
<keyword id="KW-0633">Potassium transport</keyword>
<keyword id="KW-0812">Transmembrane</keyword>
<keyword id="KW-1133">Transmembrane helix</keyword>
<keyword id="KW-0813">Transport</keyword>
<name>NHAP2_SHESW</name>
<sequence length="574" mass="61640">MDADSINSFFLIGALLAAVSVLLSPMSSRLGIPILLIFLAVGILAGEDGLGGIQFDDYSTAYLVSNLALAIILLDGGMRTRVASFRVALWPALSLATFGVAITTSITGLMAAWLFDLHWLQGLLVGAIVGSTDAAAVFSLLKGRSLNERVGATLEIESGSNDPMAVFLTVTLIAILANVDTELSVSFMLVSFIKQFGLGICLGLGGGWLLWKLVNLSKLAEGLYSILVLSGGLIIYAVSNKLGGSGILSIYLVGLFLGNKPTRGRHSILNVLDGMTWVSQIGMFLVLGLLLTPSDLFDILLPGFALAFGMILFARPLAVWLSLLPFKSFSSRDRWFISWVGLRGAVPIILAVFPMMAGLPGAQLYFNLAFFVVLVSLLIQGASLTTAARLAKVELPPKPLPISRSGVEIYPSSEWEVFVYCLSENKWCVGEPLKRLSMPDGTRIAAVFRGDKLLHPSGSTCLEAGDILCVLGQERSLDALSHLFSQAPETKEVPRFFGDFFIETDVKLADLAPIYGLDLDEEASEMTVADLVASELGAHPVIGDHFQWQSLHWVVAGLHEGKVTNIGIRLPPET</sequence>
<gene>
    <name evidence="1" type="primary">nhaP2</name>
    <name type="synonym">cvrA</name>
    <name type="ordered locus">Sputw3181_0874</name>
</gene>
<accession>A1RGC9</accession>
<comment type="function">
    <text evidence="1">K(+)/H(+) antiporter that extrudes potassium in exchange for external protons and maintains the internal concentration of potassium under toxic levels.</text>
</comment>
<comment type="catalytic activity">
    <reaction evidence="1">
        <text>K(+)(in) + H(+)(out) = K(+)(out) + H(+)(in)</text>
        <dbReference type="Rhea" id="RHEA:29467"/>
        <dbReference type="ChEBI" id="CHEBI:15378"/>
        <dbReference type="ChEBI" id="CHEBI:29103"/>
    </reaction>
    <physiologicalReaction direction="left-to-right" evidence="1">
        <dbReference type="Rhea" id="RHEA:29468"/>
    </physiologicalReaction>
</comment>
<comment type="subcellular location">
    <subcellularLocation>
        <location evidence="1">Cell inner membrane</location>
        <topology evidence="1">Multi-pass membrane protein</topology>
    </subcellularLocation>
</comment>
<comment type="similarity">
    <text evidence="1">Belongs to the monovalent cation:proton antiporter 1 (CPA1) transporter (TC 2.A.36) family. NhaP2 subfamily.</text>
</comment>
<dbReference type="EMBL" id="CP000503">
    <property type="protein sequence ID" value="ABM23724.1"/>
    <property type="molecule type" value="Genomic_DNA"/>
</dbReference>
<dbReference type="RefSeq" id="WP_011788251.1">
    <property type="nucleotide sequence ID" value="NC_008750.1"/>
</dbReference>
<dbReference type="SMR" id="A1RGC9"/>
<dbReference type="KEGG" id="shw:Sputw3181_0874"/>
<dbReference type="HOGENOM" id="CLU_005912_9_2_6"/>
<dbReference type="Proteomes" id="UP000002597">
    <property type="component" value="Chromosome"/>
</dbReference>
<dbReference type="GO" id="GO:0005886">
    <property type="term" value="C:plasma membrane"/>
    <property type="evidence" value="ECO:0007669"/>
    <property type="project" value="UniProtKB-SubCell"/>
</dbReference>
<dbReference type="GO" id="GO:0050660">
    <property type="term" value="F:flavin adenine dinucleotide binding"/>
    <property type="evidence" value="ECO:0007669"/>
    <property type="project" value="InterPro"/>
</dbReference>
<dbReference type="GO" id="GO:0015386">
    <property type="term" value="F:potassium:proton antiporter activity"/>
    <property type="evidence" value="ECO:0007669"/>
    <property type="project" value="UniProtKB-UniRule"/>
</dbReference>
<dbReference type="GO" id="GO:0006884">
    <property type="term" value="P:cell volume homeostasis"/>
    <property type="evidence" value="ECO:0007669"/>
    <property type="project" value="InterPro"/>
</dbReference>
<dbReference type="Gene3D" id="1.20.1530.20">
    <property type="match status" value="1"/>
</dbReference>
<dbReference type="Gene3D" id="3.30.465.10">
    <property type="match status" value="1"/>
</dbReference>
<dbReference type="Gene3D" id="3.30.70.1450">
    <property type="entry name" value="Regulator of K+ conductance, C-terminal domain"/>
    <property type="match status" value="1"/>
</dbReference>
<dbReference type="HAMAP" id="MF_01075">
    <property type="entry name" value="NhaP2"/>
    <property type="match status" value="1"/>
</dbReference>
<dbReference type="InterPro" id="IPR006153">
    <property type="entry name" value="Cation/H_exchanger_TM"/>
</dbReference>
<dbReference type="InterPro" id="IPR036318">
    <property type="entry name" value="FAD-bd_PCMH-like_sf"/>
</dbReference>
<dbReference type="InterPro" id="IPR016169">
    <property type="entry name" value="FAD-bd_PCMH_sub2"/>
</dbReference>
<dbReference type="InterPro" id="IPR038770">
    <property type="entry name" value="Na+/solute_symporter_sf"/>
</dbReference>
<dbReference type="InterPro" id="IPR023729">
    <property type="entry name" value="NhaP2"/>
</dbReference>
<dbReference type="InterPro" id="IPR006037">
    <property type="entry name" value="RCK_C"/>
</dbReference>
<dbReference type="InterPro" id="IPR036721">
    <property type="entry name" value="RCK_C_sf"/>
</dbReference>
<dbReference type="InterPro" id="IPR005170">
    <property type="entry name" value="Transptr-assoc_dom"/>
</dbReference>
<dbReference type="NCBIfam" id="NF003714">
    <property type="entry name" value="PRK05326.1-1"/>
    <property type="match status" value="1"/>
</dbReference>
<dbReference type="NCBIfam" id="NF003715">
    <property type="entry name" value="PRK05326.1-2"/>
    <property type="match status" value="1"/>
</dbReference>
<dbReference type="NCBIfam" id="NF003716">
    <property type="entry name" value="PRK05326.1-3"/>
    <property type="match status" value="1"/>
</dbReference>
<dbReference type="PANTHER" id="PTHR32507:SF7">
    <property type="entry name" value="K(+)_H(+) ANTIPORTER NHAP2"/>
    <property type="match status" value="1"/>
</dbReference>
<dbReference type="PANTHER" id="PTHR32507">
    <property type="entry name" value="NA(+)/H(+) ANTIPORTER 1"/>
    <property type="match status" value="1"/>
</dbReference>
<dbReference type="Pfam" id="PF03471">
    <property type="entry name" value="CorC_HlyC"/>
    <property type="match status" value="1"/>
</dbReference>
<dbReference type="Pfam" id="PF00999">
    <property type="entry name" value="Na_H_Exchanger"/>
    <property type="match status" value="1"/>
</dbReference>
<dbReference type="Pfam" id="PF02080">
    <property type="entry name" value="TrkA_C"/>
    <property type="match status" value="1"/>
</dbReference>
<dbReference type="SMART" id="SM01091">
    <property type="entry name" value="CorC_HlyC"/>
    <property type="match status" value="1"/>
</dbReference>
<dbReference type="SUPFAM" id="SSF56176">
    <property type="entry name" value="FAD-binding/transporter-associated domain-like"/>
    <property type="match status" value="1"/>
</dbReference>
<dbReference type="SUPFAM" id="SSF116726">
    <property type="entry name" value="TrkA C-terminal domain-like"/>
    <property type="match status" value="1"/>
</dbReference>
<dbReference type="PROSITE" id="PS51202">
    <property type="entry name" value="RCK_C"/>
    <property type="match status" value="1"/>
</dbReference>
<evidence type="ECO:0000255" key="1">
    <source>
        <dbReference type="HAMAP-Rule" id="MF_01075"/>
    </source>
</evidence>
<feature type="chain" id="PRO_1000064676" description="K(+)/H(+) antiporter NhaP2">
    <location>
        <begin position="1"/>
        <end position="574"/>
    </location>
</feature>
<feature type="transmembrane region" description="Helical" evidence="1">
    <location>
        <begin position="6"/>
        <end position="26"/>
    </location>
</feature>
<feature type="transmembrane region" description="Helical" evidence="1">
    <location>
        <begin position="30"/>
        <end position="50"/>
    </location>
</feature>
<feature type="transmembrane region" description="Helical" evidence="1">
    <location>
        <begin position="58"/>
        <end position="78"/>
    </location>
</feature>
<feature type="transmembrane region" description="Helical" evidence="1">
    <location>
        <begin position="87"/>
        <end position="107"/>
    </location>
</feature>
<feature type="transmembrane region" description="Helical" evidence="1">
    <location>
        <begin position="109"/>
        <end position="129"/>
    </location>
</feature>
<feature type="transmembrane region" description="Helical" evidence="1">
    <location>
        <begin position="173"/>
        <end position="193"/>
    </location>
</feature>
<feature type="transmembrane region" description="Helical" evidence="1">
    <location>
        <begin position="196"/>
        <end position="216"/>
    </location>
</feature>
<feature type="transmembrane region" description="Helical" evidence="1">
    <location>
        <begin position="219"/>
        <end position="239"/>
    </location>
</feature>
<feature type="transmembrane region" description="Helical" evidence="1">
    <location>
        <begin position="242"/>
        <end position="262"/>
    </location>
</feature>
<feature type="transmembrane region" description="Helical" evidence="1">
    <location>
        <begin position="271"/>
        <end position="291"/>
    </location>
</feature>
<feature type="transmembrane region" description="Helical" evidence="1">
    <location>
        <begin position="299"/>
        <end position="319"/>
    </location>
</feature>
<feature type="transmembrane region" description="Helical" evidence="1">
    <location>
        <begin position="335"/>
        <end position="355"/>
    </location>
</feature>
<feature type="transmembrane region" description="Helical" evidence="1">
    <location>
        <begin position="359"/>
        <end position="379"/>
    </location>
</feature>
<feature type="domain" description="RCK C-terminal" evidence="1">
    <location>
        <begin position="405"/>
        <end position="486"/>
    </location>
</feature>
<protein>
    <recommendedName>
        <fullName evidence="1">K(+)/H(+) antiporter NhaP2</fullName>
    </recommendedName>
    <alternativeName>
        <fullName evidence="1">Potassium/proton antiporter NhaP2</fullName>
    </alternativeName>
</protein>
<proteinExistence type="inferred from homology"/>